<proteinExistence type="inferred from homology"/>
<sequence length="932" mass="106364">MGLTPMMRQYLEVKESCKDCILFFRLGDFYEMFFEDAKVASKELELVLTGRDCGLEERAPMCGIPYHAANTYIGRLVSAGYKIAICEQLEDPSASKGIVKRGIIKIITPGTYTDSSFLEENKNNYIMSFYLDDNMCAMSFADISTGEFNSTHSNFKEAVVLDEISKFAPREIVLEENIKESFIHTIKERFPNISISKIKQENFDYNIDNNLKEQFNNFNENEYETIVKKSANGLLYYIFHTQKNILSNINKIDYYSIVDYLTIDVNSRRNLEITENLREKTKKGSLLWALDKTNTAMGGRQLRRWIEQPLINKNPIENRLNAVEELLNNISLQEDLKEDLKSIYDIERIVGKVASKSVNAKELISLKCSIGKVPYIKEYLSNFKSDLFLNMEQCIDTLEDIHKLLDKALLDNPSLSVKEGNIIKEGFNEEVDSLREAKSNGKKWIASLEQKEKEETGIKSLKVSYNKVFGYFIEITKANLNLVPEGRYIRKQTLSNAERYITPELKEMEEKILGAEEKLIDIEYKLFTEIRDFIEENIDRMQKTARIISDIDCLCSLATVALENNYIKPNINAKDEILIEEGRHPVVEKVIPKGEFISNDSLIDTKENQLILITGPNMAGKSTYMRQVALITIMAQIGSFVPAKKANISICDKIFTRIGASDDLAAGKSTFMVEMWEVSNILKNATSKSLVLLDEVGRGTSTYDGLSIAWSVIEYICNNKNLRCKTLFATHYHELTKLEDNIEGVKNYSVSVSELENEIVFLRKIIKGGADQSYGIEVAKLAGLPSPVINRAKEILQHIEGDKEENSLNIAPSKEYKSKDYIEVSKDTSNTKNNLGSEIKHDTLSETNTDTIIEDESTKEHLSSNKKQINCRINDEKSIKKEVAVDSFQINFEYIKRDKIIEEIKNIDILNMTPMEGFNKLYDIINKTKDID</sequence>
<dbReference type="EMBL" id="CP000726">
    <property type="protein sequence ID" value="ABS32425.1"/>
    <property type="molecule type" value="Genomic_DNA"/>
</dbReference>
<dbReference type="RefSeq" id="WP_012047675.1">
    <property type="nucleotide sequence ID" value="NC_009697.1"/>
</dbReference>
<dbReference type="SMR" id="A7FUL0"/>
<dbReference type="GeneID" id="5186055"/>
<dbReference type="KEGG" id="cba:CLB_1735"/>
<dbReference type="HOGENOM" id="CLU_002472_3_0_9"/>
<dbReference type="GO" id="GO:0005829">
    <property type="term" value="C:cytosol"/>
    <property type="evidence" value="ECO:0007669"/>
    <property type="project" value="TreeGrafter"/>
</dbReference>
<dbReference type="GO" id="GO:0005524">
    <property type="term" value="F:ATP binding"/>
    <property type="evidence" value="ECO:0007669"/>
    <property type="project" value="UniProtKB-UniRule"/>
</dbReference>
<dbReference type="GO" id="GO:0140664">
    <property type="term" value="F:ATP-dependent DNA damage sensor activity"/>
    <property type="evidence" value="ECO:0007669"/>
    <property type="project" value="InterPro"/>
</dbReference>
<dbReference type="GO" id="GO:0003684">
    <property type="term" value="F:damaged DNA binding"/>
    <property type="evidence" value="ECO:0007669"/>
    <property type="project" value="UniProtKB-UniRule"/>
</dbReference>
<dbReference type="GO" id="GO:0030983">
    <property type="term" value="F:mismatched DNA binding"/>
    <property type="evidence" value="ECO:0007669"/>
    <property type="project" value="InterPro"/>
</dbReference>
<dbReference type="GO" id="GO:0006298">
    <property type="term" value="P:mismatch repair"/>
    <property type="evidence" value="ECO:0007669"/>
    <property type="project" value="UniProtKB-UniRule"/>
</dbReference>
<dbReference type="CDD" id="cd03284">
    <property type="entry name" value="ABC_MutS1"/>
    <property type="match status" value="1"/>
</dbReference>
<dbReference type="FunFam" id="1.10.1420.10:FF:000007">
    <property type="entry name" value="DNA mismatch repair protein MutS"/>
    <property type="match status" value="1"/>
</dbReference>
<dbReference type="FunFam" id="3.40.1170.10:FF:000001">
    <property type="entry name" value="DNA mismatch repair protein MutS"/>
    <property type="match status" value="1"/>
</dbReference>
<dbReference type="FunFam" id="3.40.50.300:FF:001579">
    <property type="entry name" value="DNA mismatch repair protein MutS"/>
    <property type="match status" value="1"/>
</dbReference>
<dbReference type="Gene3D" id="1.10.1420.10">
    <property type="match status" value="2"/>
</dbReference>
<dbReference type="Gene3D" id="3.40.1170.10">
    <property type="entry name" value="DNA repair protein MutS, domain I"/>
    <property type="match status" value="1"/>
</dbReference>
<dbReference type="Gene3D" id="3.30.420.110">
    <property type="entry name" value="MutS, connector domain"/>
    <property type="match status" value="1"/>
</dbReference>
<dbReference type="Gene3D" id="3.40.50.300">
    <property type="entry name" value="P-loop containing nucleotide triphosphate hydrolases"/>
    <property type="match status" value="1"/>
</dbReference>
<dbReference type="HAMAP" id="MF_00096">
    <property type="entry name" value="MutS"/>
    <property type="match status" value="1"/>
</dbReference>
<dbReference type="InterPro" id="IPR005748">
    <property type="entry name" value="DNA_mismatch_repair_MutS"/>
</dbReference>
<dbReference type="InterPro" id="IPR007695">
    <property type="entry name" value="DNA_mismatch_repair_MutS-lik_N"/>
</dbReference>
<dbReference type="InterPro" id="IPR017261">
    <property type="entry name" value="DNA_mismatch_repair_MutS/MSH"/>
</dbReference>
<dbReference type="InterPro" id="IPR000432">
    <property type="entry name" value="DNA_mismatch_repair_MutS_C"/>
</dbReference>
<dbReference type="InterPro" id="IPR007861">
    <property type="entry name" value="DNA_mismatch_repair_MutS_clamp"/>
</dbReference>
<dbReference type="InterPro" id="IPR007696">
    <property type="entry name" value="DNA_mismatch_repair_MutS_core"/>
</dbReference>
<dbReference type="InterPro" id="IPR016151">
    <property type="entry name" value="DNA_mismatch_repair_MutS_N"/>
</dbReference>
<dbReference type="InterPro" id="IPR036187">
    <property type="entry name" value="DNA_mismatch_repair_MutS_sf"/>
</dbReference>
<dbReference type="InterPro" id="IPR007860">
    <property type="entry name" value="DNA_mmatch_repair_MutS_con_dom"/>
</dbReference>
<dbReference type="InterPro" id="IPR045076">
    <property type="entry name" value="MutS"/>
</dbReference>
<dbReference type="InterPro" id="IPR036678">
    <property type="entry name" value="MutS_con_dom_sf"/>
</dbReference>
<dbReference type="InterPro" id="IPR027417">
    <property type="entry name" value="P-loop_NTPase"/>
</dbReference>
<dbReference type="NCBIfam" id="TIGR01070">
    <property type="entry name" value="mutS1"/>
    <property type="match status" value="1"/>
</dbReference>
<dbReference type="NCBIfam" id="NF003810">
    <property type="entry name" value="PRK05399.1"/>
    <property type="match status" value="1"/>
</dbReference>
<dbReference type="PANTHER" id="PTHR11361:SF34">
    <property type="entry name" value="DNA MISMATCH REPAIR PROTEIN MSH1, MITOCHONDRIAL"/>
    <property type="match status" value="1"/>
</dbReference>
<dbReference type="PANTHER" id="PTHR11361">
    <property type="entry name" value="DNA MISMATCH REPAIR PROTEIN MUTS FAMILY MEMBER"/>
    <property type="match status" value="1"/>
</dbReference>
<dbReference type="Pfam" id="PF01624">
    <property type="entry name" value="MutS_I"/>
    <property type="match status" value="1"/>
</dbReference>
<dbReference type="Pfam" id="PF05188">
    <property type="entry name" value="MutS_II"/>
    <property type="match status" value="1"/>
</dbReference>
<dbReference type="Pfam" id="PF05192">
    <property type="entry name" value="MutS_III"/>
    <property type="match status" value="1"/>
</dbReference>
<dbReference type="Pfam" id="PF05190">
    <property type="entry name" value="MutS_IV"/>
    <property type="match status" value="1"/>
</dbReference>
<dbReference type="Pfam" id="PF00488">
    <property type="entry name" value="MutS_V"/>
    <property type="match status" value="1"/>
</dbReference>
<dbReference type="PIRSF" id="PIRSF037677">
    <property type="entry name" value="DNA_mis_repair_Msh6"/>
    <property type="match status" value="1"/>
</dbReference>
<dbReference type="SMART" id="SM00534">
    <property type="entry name" value="MUTSac"/>
    <property type="match status" value="1"/>
</dbReference>
<dbReference type="SMART" id="SM00533">
    <property type="entry name" value="MUTSd"/>
    <property type="match status" value="1"/>
</dbReference>
<dbReference type="SUPFAM" id="SSF55271">
    <property type="entry name" value="DNA repair protein MutS, domain I"/>
    <property type="match status" value="1"/>
</dbReference>
<dbReference type="SUPFAM" id="SSF53150">
    <property type="entry name" value="DNA repair protein MutS, domain II"/>
    <property type="match status" value="1"/>
</dbReference>
<dbReference type="SUPFAM" id="SSF48334">
    <property type="entry name" value="DNA repair protein MutS, domain III"/>
    <property type="match status" value="1"/>
</dbReference>
<dbReference type="SUPFAM" id="SSF52540">
    <property type="entry name" value="P-loop containing nucleoside triphosphate hydrolases"/>
    <property type="match status" value="1"/>
</dbReference>
<dbReference type="PROSITE" id="PS00486">
    <property type="entry name" value="DNA_MISMATCH_REPAIR_2"/>
    <property type="match status" value="1"/>
</dbReference>
<evidence type="ECO:0000255" key="1">
    <source>
        <dbReference type="HAMAP-Rule" id="MF_00096"/>
    </source>
</evidence>
<accession>A7FUL0</accession>
<organism>
    <name type="scientific">Clostridium botulinum (strain ATCC 19397 / Type A)</name>
    <dbReference type="NCBI Taxonomy" id="441770"/>
    <lineage>
        <taxon>Bacteria</taxon>
        <taxon>Bacillati</taxon>
        <taxon>Bacillota</taxon>
        <taxon>Clostridia</taxon>
        <taxon>Eubacteriales</taxon>
        <taxon>Clostridiaceae</taxon>
        <taxon>Clostridium</taxon>
    </lineage>
</organism>
<gene>
    <name evidence="1" type="primary">mutS</name>
    <name type="ordered locus">CLB_1735</name>
</gene>
<reference key="1">
    <citation type="journal article" date="2007" name="PLoS ONE">
        <title>Analysis of the neurotoxin complex genes in Clostridium botulinum A1-A4 and B1 strains: BoNT/A3, /Ba4 and /B1 clusters are located within plasmids.</title>
        <authorList>
            <person name="Smith T.J."/>
            <person name="Hill K.K."/>
            <person name="Foley B.T."/>
            <person name="Detter J.C."/>
            <person name="Munk A.C."/>
            <person name="Bruce D.C."/>
            <person name="Doggett N.A."/>
            <person name="Smith L.A."/>
            <person name="Marks J.D."/>
            <person name="Xie G."/>
            <person name="Brettin T.S."/>
        </authorList>
    </citation>
    <scope>NUCLEOTIDE SEQUENCE [LARGE SCALE GENOMIC DNA]</scope>
    <source>
        <strain>ATCC 19397 / Type A</strain>
    </source>
</reference>
<protein>
    <recommendedName>
        <fullName evidence="1">DNA mismatch repair protein MutS</fullName>
    </recommendedName>
</protein>
<name>MUTS_CLOB1</name>
<keyword id="KW-0067">ATP-binding</keyword>
<keyword id="KW-0227">DNA damage</keyword>
<keyword id="KW-0234">DNA repair</keyword>
<keyword id="KW-0238">DNA-binding</keyword>
<keyword id="KW-0547">Nucleotide-binding</keyword>
<feature type="chain" id="PRO_0000335138" description="DNA mismatch repair protein MutS">
    <location>
        <begin position="1"/>
        <end position="932"/>
    </location>
</feature>
<feature type="binding site" evidence="1">
    <location>
        <begin position="615"/>
        <end position="622"/>
    </location>
    <ligand>
        <name>ATP</name>
        <dbReference type="ChEBI" id="CHEBI:30616"/>
    </ligand>
</feature>
<comment type="function">
    <text evidence="1">This protein is involved in the repair of mismatches in DNA. It is possible that it carries out the mismatch recognition step. This protein has a weak ATPase activity.</text>
</comment>
<comment type="similarity">
    <text evidence="1">Belongs to the DNA mismatch repair MutS family.</text>
</comment>